<dbReference type="EC" id="7.3.2.3" evidence="1"/>
<dbReference type="EMBL" id="BA000039">
    <property type="protein sequence ID" value="BAC09242.1"/>
    <property type="molecule type" value="Genomic_DNA"/>
</dbReference>
<dbReference type="RefSeq" id="NP_682480.1">
    <property type="nucleotide sequence ID" value="NC_004113.1"/>
</dbReference>
<dbReference type="RefSeq" id="WP_011057527.1">
    <property type="nucleotide sequence ID" value="NC_004113.1"/>
</dbReference>
<dbReference type="SMR" id="Q8DIA0"/>
<dbReference type="STRING" id="197221.gene:10748292"/>
<dbReference type="EnsemblBacteria" id="BAC09242">
    <property type="protein sequence ID" value="BAC09242"/>
    <property type="gene ID" value="BAC09242"/>
</dbReference>
<dbReference type="KEGG" id="tel:tlr1690"/>
<dbReference type="PATRIC" id="fig|197221.4.peg.1771"/>
<dbReference type="eggNOG" id="COG1118">
    <property type="taxonomic scope" value="Bacteria"/>
</dbReference>
<dbReference type="Proteomes" id="UP000000440">
    <property type="component" value="Chromosome"/>
</dbReference>
<dbReference type="GO" id="GO:0043190">
    <property type="term" value="C:ATP-binding cassette (ABC) transporter complex"/>
    <property type="evidence" value="ECO:0007669"/>
    <property type="project" value="InterPro"/>
</dbReference>
<dbReference type="GO" id="GO:0015419">
    <property type="term" value="F:ABC-type sulfate transporter activity"/>
    <property type="evidence" value="ECO:0007669"/>
    <property type="project" value="InterPro"/>
</dbReference>
<dbReference type="GO" id="GO:0102025">
    <property type="term" value="F:ABC-type thiosulfate transporter activity"/>
    <property type="evidence" value="ECO:0007669"/>
    <property type="project" value="RHEA"/>
</dbReference>
<dbReference type="GO" id="GO:0005524">
    <property type="term" value="F:ATP binding"/>
    <property type="evidence" value="ECO:0007669"/>
    <property type="project" value="UniProtKB-KW"/>
</dbReference>
<dbReference type="GO" id="GO:0016887">
    <property type="term" value="F:ATP hydrolysis activity"/>
    <property type="evidence" value="ECO:0007669"/>
    <property type="project" value="InterPro"/>
</dbReference>
<dbReference type="CDD" id="cd03296">
    <property type="entry name" value="ABC_CysA_sulfate_importer"/>
    <property type="match status" value="1"/>
</dbReference>
<dbReference type="FunFam" id="3.40.50.300:FF:000425">
    <property type="entry name" value="Probable ABC transporter, ATP-binding subunit"/>
    <property type="match status" value="1"/>
</dbReference>
<dbReference type="Gene3D" id="2.40.50.100">
    <property type="match status" value="1"/>
</dbReference>
<dbReference type="Gene3D" id="3.40.50.300">
    <property type="entry name" value="P-loop containing nucleotide triphosphate hydrolases"/>
    <property type="match status" value="1"/>
</dbReference>
<dbReference type="InterPro" id="IPR003593">
    <property type="entry name" value="AAA+_ATPase"/>
</dbReference>
<dbReference type="InterPro" id="IPR050093">
    <property type="entry name" value="ABC_SmlMolc_Importer"/>
</dbReference>
<dbReference type="InterPro" id="IPR003439">
    <property type="entry name" value="ABC_transporter-like_ATP-bd"/>
</dbReference>
<dbReference type="InterPro" id="IPR017871">
    <property type="entry name" value="ABC_transporter-like_CS"/>
</dbReference>
<dbReference type="InterPro" id="IPR008995">
    <property type="entry name" value="Mo/tungstate-bd_C_term_dom"/>
</dbReference>
<dbReference type="InterPro" id="IPR027417">
    <property type="entry name" value="P-loop_NTPase"/>
</dbReference>
<dbReference type="InterPro" id="IPR005666">
    <property type="entry name" value="Sulph_transpt1"/>
</dbReference>
<dbReference type="InterPro" id="IPR005116">
    <property type="entry name" value="Transp-assoc_OB_typ1"/>
</dbReference>
<dbReference type="NCBIfam" id="TIGR00968">
    <property type="entry name" value="3a0106s01"/>
    <property type="match status" value="1"/>
</dbReference>
<dbReference type="PANTHER" id="PTHR42781">
    <property type="entry name" value="SPERMIDINE/PUTRESCINE IMPORT ATP-BINDING PROTEIN POTA"/>
    <property type="match status" value="1"/>
</dbReference>
<dbReference type="PANTHER" id="PTHR42781:SF4">
    <property type="entry name" value="SPERMIDINE_PUTRESCINE IMPORT ATP-BINDING PROTEIN POTA"/>
    <property type="match status" value="1"/>
</dbReference>
<dbReference type="Pfam" id="PF00005">
    <property type="entry name" value="ABC_tran"/>
    <property type="match status" value="1"/>
</dbReference>
<dbReference type="Pfam" id="PF03459">
    <property type="entry name" value="TOBE"/>
    <property type="match status" value="1"/>
</dbReference>
<dbReference type="SMART" id="SM00382">
    <property type="entry name" value="AAA"/>
    <property type="match status" value="1"/>
</dbReference>
<dbReference type="SUPFAM" id="SSF50331">
    <property type="entry name" value="MOP-like"/>
    <property type="match status" value="1"/>
</dbReference>
<dbReference type="SUPFAM" id="SSF52540">
    <property type="entry name" value="P-loop containing nucleoside triphosphate hydrolases"/>
    <property type="match status" value="1"/>
</dbReference>
<dbReference type="PROSITE" id="PS00211">
    <property type="entry name" value="ABC_TRANSPORTER_1"/>
    <property type="match status" value="1"/>
</dbReference>
<dbReference type="PROSITE" id="PS50893">
    <property type="entry name" value="ABC_TRANSPORTER_2"/>
    <property type="match status" value="1"/>
</dbReference>
<dbReference type="PROSITE" id="PS51237">
    <property type="entry name" value="CYSA"/>
    <property type="match status" value="1"/>
</dbReference>
<keyword id="KW-0067">ATP-binding</keyword>
<keyword id="KW-0997">Cell inner membrane</keyword>
<keyword id="KW-1003">Cell membrane</keyword>
<keyword id="KW-0472">Membrane</keyword>
<keyword id="KW-0547">Nucleotide-binding</keyword>
<keyword id="KW-1185">Reference proteome</keyword>
<keyword id="KW-0764">Sulfate transport</keyword>
<keyword id="KW-1278">Translocase</keyword>
<keyword id="KW-0813">Transport</keyword>
<name>CYSA_THEVB</name>
<organism>
    <name type="scientific">Thermosynechococcus vestitus (strain NIES-2133 / IAM M-273 / BP-1)</name>
    <dbReference type="NCBI Taxonomy" id="197221"/>
    <lineage>
        <taxon>Bacteria</taxon>
        <taxon>Bacillati</taxon>
        <taxon>Cyanobacteriota</taxon>
        <taxon>Cyanophyceae</taxon>
        <taxon>Acaryochloridales</taxon>
        <taxon>Thermosynechococcaceae</taxon>
        <taxon>Thermosynechococcus</taxon>
    </lineage>
</organism>
<sequence length="336" mass="37701">MGITIENVSKSFGSFQAVKQVDLDIASGSLVALLGPSGSGKSTLLRLIAGLEMPDTGRILLTGKDATYQSVQERNIGFVFQHYALFKHMTVRQNIAFGLELRKVPRAKINARVAELLELVQLTGLGDRYPSQLSGGQRQRVALARALAVEPKVLLLDEPFGALDAKVRKELRAWLRRLHDDVHVTTVFVTHDQEEAMEVADQIVVMNKGQVEQVGTPAEIYDHPASPFVMSFIGPVNVLRSRVFQQSEGTAAHCDIFLRPRDIIIETRPNGNTVSARIHRIIHLGWEIQVELRLDDGQELMAHLSRERFDELHLEPQQQVFIKPREAKSFPLYYSI</sequence>
<comment type="function">
    <text evidence="1">Part of the ABC transporter complex CysAWTP involved in sulfate/thiosulfate import. Responsible for energy coupling to the transport system.</text>
</comment>
<comment type="catalytic activity">
    <reaction evidence="1">
        <text>sulfate(out) + ATP + H2O = sulfate(in) + ADP + phosphate + H(+)</text>
        <dbReference type="Rhea" id="RHEA:10192"/>
        <dbReference type="ChEBI" id="CHEBI:15377"/>
        <dbReference type="ChEBI" id="CHEBI:15378"/>
        <dbReference type="ChEBI" id="CHEBI:16189"/>
        <dbReference type="ChEBI" id="CHEBI:30616"/>
        <dbReference type="ChEBI" id="CHEBI:43474"/>
        <dbReference type="ChEBI" id="CHEBI:456216"/>
        <dbReference type="EC" id="7.3.2.3"/>
    </reaction>
</comment>
<comment type="catalytic activity">
    <reaction evidence="1">
        <text>thiosulfate(out) + ATP + H2O = thiosulfate(in) + ADP + phosphate + H(+)</text>
        <dbReference type="Rhea" id="RHEA:29871"/>
        <dbReference type="ChEBI" id="CHEBI:15377"/>
        <dbReference type="ChEBI" id="CHEBI:15378"/>
        <dbReference type="ChEBI" id="CHEBI:30616"/>
        <dbReference type="ChEBI" id="CHEBI:33542"/>
        <dbReference type="ChEBI" id="CHEBI:43474"/>
        <dbReference type="ChEBI" id="CHEBI:456216"/>
        <dbReference type="EC" id="7.3.2.3"/>
    </reaction>
</comment>
<comment type="subunit">
    <text evidence="1">The complex is composed of two ATP-binding proteins (CysA), two transmembrane proteins (CysT and CysW) and a solute-binding protein (CysP).</text>
</comment>
<comment type="subcellular location">
    <subcellularLocation>
        <location evidence="1">Cell inner membrane</location>
        <topology evidence="1">Peripheral membrane protein</topology>
    </subcellularLocation>
</comment>
<comment type="similarity">
    <text evidence="1">Belongs to the ABC transporter superfamily. Sulfate/tungstate importer (TC 3.A.1.6) family.</text>
</comment>
<accession>Q8DIA0</accession>
<protein>
    <recommendedName>
        <fullName evidence="1">Sulfate/thiosulfate import ATP-binding protein CysA</fullName>
        <ecNumber evidence="1">7.3.2.3</ecNumber>
    </recommendedName>
    <alternativeName>
        <fullName evidence="1">Sulfate-transporting ATPase</fullName>
    </alternativeName>
</protein>
<gene>
    <name evidence="1" type="primary">cysA</name>
    <name type="ordered locus">tlr1690</name>
</gene>
<reference key="1">
    <citation type="journal article" date="2002" name="DNA Res.">
        <title>Complete genome structure of the thermophilic cyanobacterium Thermosynechococcus elongatus BP-1.</title>
        <authorList>
            <person name="Nakamura Y."/>
            <person name="Kaneko T."/>
            <person name="Sato S."/>
            <person name="Ikeuchi M."/>
            <person name="Katoh H."/>
            <person name="Sasamoto S."/>
            <person name="Watanabe A."/>
            <person name="Iriguchi M."/>
            <person name="Kawashima K."/>
            <person name="Kimura T."/>
            <person name="Kishida Y."/>
            <person name="Kiyokawa C."/>
            <person name="Kohara M."/>
            <person name="Matsumoto M."/>
            <person name="Matsuno A."/>
            <person name="Nakazaki N."/>
            <person name="Shimpo S."/>
            <person name="Sugimoto M."/>
            <person name="Takeuchi C."/>
            <person name="Yamada M."/>
            <person name="Tabata S."/>
        </authorList>
    </citation>
    <scope>NUCLEOTIDE SEQUENCE [LARGE SCALE GENOMIC DNA]</scope>
    <source>
        <strain>NIES-2133 / IAM M-273 / BP-1</strain>
    </source>
</reference>
<feature type="chain" id="PRO_0000092295" description="Sulfate/thiosulfate import ATP-binding protein CysA">
    <location>
        <begin position="1"/>
        <end position="336"/>
    </location>
</feature>
<feature type="domain" description="ABC transporter" evidence="1">
    <location>
        <begin position="3"/>
        <end position="233"/>
    </location>
</feature>
<feature type="binding site" evidence="1">
    <location>
        <begin position="35"/>
        <end position="42"/>
    </location>
    <ligand>
        <name>ATP</name>
        <dbReference type="ChEBI" id="CHEBI:30616"/>
    </ligand>
</feature>
<proteinExistence type="inferred from homology"/>
<evidence type="ECO:0000255" key="1">
    <source>
        <dbReference type="HAMAP-Rule" id="MF_01701"/>
    </source>
</evidence>